<organism>
    <name type="scientific">Pleurotus ostreatus</name>
    <name type="common">Oyster mushroom</name>
    <name type="synonym">White-rot fungus</name>
    <dbReference type="NCBI Taxonomy" id="5322"/>
    <lineage>
        <taxon>Eukaryota</taxon>
        <taxon>Fungi</taxon>
        <taxon>Dikarya</taxon>
        <taxon>Basidiomycota</taxon>
        <taxon>Agaricomycotina</taxon>
        <taxon>Agaricomycetes</taxon>
        <taxon>Agaricomycetidae</taxon>
        <taxon>Agaricales</taxon>
        <taxon>Pleurotineae</taxon>
        <taxon>Pleurotaceae</taxon>
        <taxon>Pleurotus</taxon>
    </lineage>
</organism>
<reference evidence="3" key="1">
    <citation type="journal article" date="2005" name="J. Pept. Res.">
        <title>A low-molecular mass ribonuclease from the brown oyster mushroom.</title>
        <authorList>
            <person name="Xia L."/>
            <person name="Chu K.T."/>
            <person name="Ng T.B."/>
        </authorList>
    </citation>
    <scope>PROTEIN SEQUENCE</scope>
    <scope>FUNCTION</scope>
    <scope>ACTIVITY REGULATION</scope>
    <scope>BIOPHYSICOCHEMICAL PROPERTIES</scope>
    <scope>MASS SPECTROMETRY</scope>
    <source>
        <tissue evidence="1">Fruiting body</tissue>
    </source>
</reference>
<dbReference type="EC" id="3.1.-.-"/>
<dbReference type="GO" id="GO:0004540">
    <property type="term" value="F:RNA nuclease activity"/>
    <property type="evidence" value="ECO:0000314"/>
    <property type="project" value="UniProtKB"/>
</dbReference>
<dbReference type="GO" id="GO:0045839">
    <property type="term" value="P:negative regulation of mitotic nuclear division"/>
    <property type="evidence" value="ECO:0000314"/>
    <property type="project" value="UniProtKB"/>
</dbReference>
<name>RNAM_PLEOS</name>
<feature type="chain" id="PRO_0000244520" description="Ribonuclease">
    <location>
        <begin position="1"/>
        <end position="12" status="greater than"/>
    </location>
</feature>
<feature type="non-terminal residue" evidence="2">
    <location>
        <position position="12"/>
    </location>
</feature>
<proteinExistence type="evidence at protein level"/>
<accession>P84867</accession>
<comment type="function">
    <text evidence="1">Has ribonuclease activity towards yeast tRNA, polyadenine, polycytosine and polyguanine, but lacks ribonuclease activity against polyuracil. Has antiproliferative activity towards L1210 tumor cell line with an IC(50) of 41 uM. Lacks mitogenic activity towards murine splenocytes and does not inhibit HIV-1 reverse transcriptase.</text>
</comment>
<comment type="activity regulation">
    <text evidence="1">Activated by Mg(2+) and Zn(2+) ions at low concentrations. Inhibited by Ca(2+), Cu(2+), Fe(2+), Mg(2+), Mn(2+) and Zn(2+) at higher concentrations.</text>
</comment>
<comment type="biophysicochemical properties">
    <kinetics>
        <KM evidence="1">60 uM for yeast tRNA</KM>
    </kinetics>
    <phDependence>
        <text evidence="1">Optimum pH is 8. Active from pH 3 to 9.</text>
    </phDependence>
    <temperatureDependence>
        <text evidence="1">Optimum temperature is 50-70 degrees Celsius.</text>
    </temperatureDependence>
</comment>
<comment type="mass spectrometry" mass="8371.0" method="MALDI" evidence="1"/>
<sequence length="12" mass="1481">VRPYLVAFYESH</sequence>
<keyword id="KW-0903">Direct protein sequencing</keyword>
<keyword id="KW-0378">Hydrolase</keyword>
<protein>
    <recommendedName>
        <fullName>Ribonuclease</fullName>
        <ecNumber>3.1.-.-</ecNumber>
    </recommendedName>
</protein>
<evidence type="ECO:0000269" key="1">
    <source>
    </source>
</evidence>
<evidence type="ECO:0000303" key="2">
    <source>
    </source>
</evidence>
<evidence type="ECO:0000305" key="3"/>